<reference key="1">
    <citation type="journal article" date="2002" name="Genes Cells">
        <title>lal-1: a differentially expressed novel gene during proliferation in liver regeneration and in hepatoma cells.</title>
        <authorList>
            <person name="Della Fazia M.A."/>
            <person name="Piobbico D."/>
            <person name="Bartoli D."/>
            <person name="Castelli M."/>
            <person name="Brancorsini S."/>
            <person name="Viola Magni M."/>
            <person name="Servillo G."/>
        </authorList>
    </citation>
    <scope>NUCLEOTIDE SEQUENCE [MRNA]</scope>
    <scope>INDUCTION</scope>
</reference>
<reference key="2">
    <citation type="submission" date="1998-10" db="EMBL/GenBank/DDBJ databases">
        <authorList>
            <person name="Chen Y."/>
            <person name="Talmage D."/>
        </authorList>
    </citation>
    <scope>NUCLEOTIDE SEQUENCE [MRNA]</scope>
    <source>
        <strain>Fischer</strain>
    </source>
</reference>
<reference key="3">
    <citation type="journal article" date="2004" name="Genome Res.">
        <title>The status, quality, and expansion of the NIH full-length cDNA project: the Mammalian Gene Collection (MGC).</title>
        <authorList>
            <consortium name="The MGC Project Team"/>
        </authorList>
    </citation>
    <scope>NUCLEOTIDE SEQUENCE [LARGE SCALE MRNA]</scope>
    <source>
        <tissue>Lung</tissue>
    </source>
</reference>
<reference key="4">
    <citation type="submission" date="2009-01" db="UniProtKB">
        <authorList>
            <person name="Lubec G."/>
            <person name="Chen W.-Q."/>
        </authorList>
    </citation>
    <scope>PROTEIN SEQUENCE OF 170-182 AND 262-279</scope>
    <scope>IDENTIFICATION BY MASS SPECTROMETRY</scope>
    <source>
        <strain>Sprague-Dawley</strain>
        <tissue>Hippocampus</tissue>
    </source>
</reference>
<reference key="5">
    <citation type="journal article" date="2012" name="Biochimie">
        <title>Cathepsin C and plasma glutamate carboxypeptidase secreted from Fischer rat thyroid cells liberate thyroxin from the N-terminus of thyroglobulin.</title>
        <authorList>
            <person name="Suban D."/>
            <person name="Zajc T."/>
            <person name="Renko M."/>
            <person name="Turk B."/>
            <person name="Turk V."/>
            <person name="Dolenc I."/>
        </authorList>
    </citation>
    <scope>FUNCTION</scope>
    <scope>SUBCELLULAR LOCATION</scope>
    <scope>GLYCOSYLATION</scope>
</reference>
<keyword id="KW-0121">Carboxypeptidase</keyword>
<keyword id="KW-0903">Direct protein sequencing</keyword>
<keyword id="KW-0256">Endoplasmic reticulum</keyword>
<keyword id="KW-0325">Glycoprotein</keyword>
<keyword id="KW-0333">Golgi apparatus</keyword>
<keyword id="KW-0378">Hydrolase</keyword>
<keyword id="KW-0458">Lysosome</keyword>
<keyword id="KW-0479">Metal-binding</keyword>
<keyword id="KW-0482">Metalloprotease</keyword>
<keyword id="KW-0645">Protease</keyword>
<keyword id="KW-1185">Reference proteome</keyword>
<keyword id="KW-0964">Secreted</keyword>
<keyword id="KW-0732">Signal</keyword>
<keyword id="KW-0862">Zinc</keyword>
<keyword id="KW-0865">Zymogen</keyword>
<comment type="function">
    <text evidence="4">Carboxypeptidase that may play an important role in the hydrolysis of circulating peptides. Catalyzes the hydrolysis of dipeptides with unsubstituted terminals into amino acids. May play a role in the liberation of thyroxine hormone from its thyroglobulin (Tg) precursor.</text>
</comment>
<comment type="subunit">
    <text evidence="1">Homodimer. The monomeric form is inactive while the homodimer is active (By similarity).</text>
</comment>
<comment type="subcellular location">
    <subcellularLocation>
        <location evidence="4">Endoplasmic reticulum</location>
    </subcellularLocation>
    <subcellularLocation>
        <location evidence="4">Golgi apparatus</location>
    </subcellularLocation>
    <subcellularLocation>
        <location evidence="4">Lysosome</location>
    </subcellularLocation>
    <subcellularLocation>
        <location evidence="4">Secreted</location>
    </subcellularLocation>
    <text>Secretion is stimulated by TSH/thyroid-stimulating hormone, INS/insulin and SST/somatostatin.</text>
</comment>
<comment type="induction">
    <text evidence="3">During regeneration of liver.</text>
</comment>
<comment type="PTM">
    <text evidence="4">N-glycosylated. The secreted form is modified by hybrid or complex type oligosaccharide chains.</text>
</comment>
<comment type="similarity">
    <text evidence="5">Belongs to the peptidase M28 family.</text>
</comment>
<sequence length="472" mass="52042">MRFLFFLFVAVVHLFSLGSGKAIYKSGVSQRTFQEIKEEIANYEDVAKAIINLAVYGKYQNRSYERLGLLVDTVGPRLSGSKNLEKAIQIMYQNLQQDGLENVHLEQVRIPHWERGEESAVMVVPRIHKLAILGLGGSIGTPPEGITAEVLVVASFVELQRRASEARGKIVVYNQPYTDYGKTVQYRERGAVEAAKVGAVASLIRSVASFSIYSPHTGHQGYQDGVPKIPTACITIEDAEMMSRMASRGDKIVIHLKMGAKTYPDTDSFNTVAEITGSKYPEEVVLVSGHLDSWDVGQGALDDGGGAFISWEALSLVKDLGLRPKRTLRLVLWTAEEQGGVGASQYYELHKANISKYSLVMEADSGTFLPTGLQFTGSDKARAIMKEVMSLLQPLNITKVFNDAEGTDINFWIQAGVPGASLRDDLYKYFFFHHSHGDTMTAMDPKQMNVAAAVWAVVAYVVADMEEMLPRS</sequence>
<proteinExistence type="evidence at protein level"/>
<protein>
    <recommendedName>
        <fullName>Carboxypeptidase Q</fullName>
        <ecNumber>3.4.17.-</ecNumber>
    </recommendedName>
    <alternativeName>
        <fullName>Hematopoietic lineage switch 2 related protein</fullName>
        <shortName>Hls2-rp</shortName>
    </alternativeName>
    <alternativeName>
        <fullName>Liver annexin-like protein 1</fullName>
        <shortName>LAL-1</shortName>
    </alternativeName>
    <alternativeName>
        <fullName>Plasma glutamate carboxypeptidase</fullName>
    </alternativeName>
</protein>
<feature type="signal peptide" evidence="2">
    <location>
        <begin position="1"/>
        <end position="20"/>
    </location>
</feature>
<feature type="propeptide" id="PRO_0000312264" evidence="1">
    <location>
        <begin position="21"/>
        <end position="44"/>
    </location>
</feature>
<feature type="chain" id="PRO_0000312265" description="Carboxypeptidase Q">
    <location>
        <begin position="45"/>
        <end position="472"/>
    </location>
</feature>
<feature type="active site" description="Nucleophile" evidence="1">
    <location>
        <position position="336"/>
    </location>
</feature>
<feature type="binding site" evidence="1">
    <location>
        <position position="290"/>
    </location>
    <ligand>
        <name>Zn(2+)</name>
        <dbReference type="ChEBI" id="CHEBI:29105"/>
        <label>1</label>
    </ligand>
</feature>
<feature type="binding site" evidence="1">
    <location>
        <position position="302"/>
    </location>
    <ligand>
        <name>Zn(2+)</name>
        <dbReference type="ChEBI" id="CHEBI:29105"/>
        <label>1</label>
    </ligand>
</feature>
<feature type="binding site" evidence="1">
    <location>
        <position position="302"/>
    </location>
    <ligand>
        <name>Zn(2+)</name>
        <dbReference type="ChEBI" id="CHEBI:29105"/>
        <label>2</label>
        <note>catalytic</note>
    </ligand>
</feature>
<feature type="binding site" evidence="1">
    <location>
        <position position="337"/>
    </location>
    <ligand>
        <name>Zn(2+)</name>
        <dbReference type="ChEBI" id="CHEBI:29105"/>
        <label>2</label>
        <note>catalytic</note>
    </ligand>
</feature>
<feature type="binding site" evidence="1">
    <location>
        <position position="364"/>
    </location>
    <ligand>
        <name>Zn(2+)</name>
        <dbReference type="ChEBI" id="CHEBI:29105"/>
        <label>1</label>
    </ligand>
</feature>
<feature type="binding site" evidence="1">
    <location>
        <position position="434"/>
    </location>
    <ligand>
        <name>Zn(2+)</name>
        <dbReference type="ChEBI" id="CHEBI:29105"/>
        <label>2</label>
        <note>catalytic</note>
    </ligand>
</feature>
<feature type="glycosylation site" description="N-linked (GlcNAc...) asparagine" evidence="2">
    <location>
        <position position="61"/>
    </location>
</feature>
<feature type="glycosylation site" description="N-linked (GlcNAc...) asparagine" evidence="2">
    <location>
        <position position="353"/>
    </location>
</feature>
<feature type="glycosylation site" description="N-linked (GlcNAc...) asparagine" evidence="2">
    <location>
        <position position="396"/>
    </location>
</feature>
<feature type="sequence conflict" description="In Ref. 2; AAC72384." evidence="5" ref="2">
    <original>E</original>
    <variation>G</variation>
    <location>
        <position position="114"/>
    </location>
</feature>
<feature type="sequence conflict" description="In Ref. 1; AAF36518." evidence="5" ref="1">
    <original>M</original>
    <variation>T</variation>
    <location>
        <position position="245"/>
    </location>
</feature>
<organism>
    <name type="scientific">Rattus norvegicus</name>
    <name type="common">Rat</name>
    <dbReference type="NCBI Taxonomy" id="10116"/>
    <lineage>
        <taxon>Eukaryota</taxon>
        <taxon>Metazoa</taxon>
        <taxon>Chordata</taxon>
        <taxon>Craniata</taxon>
        <taxon>Vertebrata</taxon>
        <taxon>Euteleostomi</taxon>
        <taxon>Mammalia</taxon>
        <taxon>Eutheria</taxon>
        <taxon>Euarchontoglires</taxon>
        <taxon>Glires</taxon>
        <taxon>Rodentia</taxon>
        <taxon>Myomorpha</taxon>
        <taxon>Muroidea</taxon>
        <taxon>Muridae</taxon>
        <taxon>Murinae</taxon>
        <taxon>Rattus</taxon>
    </lineage>
</organism>
<evidence type="ECO:0000250" key="1"/>
<evidence type="ECO:0000255" key="2"/>
<evidence type="ECO:0000269" key="3">
    <source>
    </source>
</evidence>
<evidence type="ECO:0000269" key="4">
    <source>
    </source>
</evidence>
<evidence type="ECO:0000305" key="5"/>
<gene>
    <name type="primary">Cpq</name>
    <name type="synonym">Pgcp</name>
</gene>
<accession>Q6IRK9</accession>
<accession>Q9JLV0</accession>
<accession>Q9Z1Y1</accession>
<name>CBPQ_RAT</name>
<dbReference type="EC" id="3.4.17.-"/>
<dbReference type="EMBL" id="AF131077">
    <property type="protein sequence ID" value="AAF36518.1"/>
    <property type="molecule type" value="mRNA"/>
</dbReference>
<dbReference type="EMBL" id="AF097723">
    <property type="protein sequence ID" value="AAC72384.1"/>
    <property type="molecule type" value="mRNA"/>
</dbReference>
<dbReference type="EMBL" id="BC070884">
    <property type="protein sequence ID" value="AAH70884.1"/>
    <property type="molecule type" value="mRNA"/>
</dbReference>
<dbReference type="RefSeq" id="NP_113828.1">
    <property type="nucleotide sequence ID" value="NM_031640.1"/>
</dbReference>
<dbReference type="RefSeq" id="XP_008763639.1">
    <property type="nucleotide sequence ID" value="XM_008765417.4"/>
</dbReference>
<dbReference type="SMR" id="Q6IRK9"/>
<dbReference type="FunCoup" id="Q6IRK9">
    <property type="interactions" value="436"/>
</dbReference>
<dbReference type="IntAct" id="Q6IRK9">
    <property type="interactions" value="1"/>
</dbReference>
<dbReference type="STRING" id="10116.ENSRNOP00000008211"/>
<dbReference type="MEROPS" id="M28.014"/>
<dbReference type="GlyCosmos" id="Q6IRK9">
    <property type="glycosylation" value="3 sites, No reported glycans"/>
</dbReference>
<dbReference type="GlyGen" id="Q6IRK9">
    <property type="glycosylation" value="3 sites"/>
</dbReference>
<dbReference type="iPTMnet" id="Q6IRK9"/>
<dbReference type="PhosphoSitePlus" id="Q6IRK9"/>
<dbReference type="PaxDb" id="10116-ENSRNOP00000008211"/>
<dbReference type="Ensembl" id="ENSRNOT00000008211.7">
    <property type="protein sequence ID" value="ENSRNOP00000008211.4"/>
    <property type="gene ID" value="ENSRNOG00000005931.7"/>
</dbReference>
<dbReference type="GeneID" id="58952"/>
<dbReference type="KEGG" id="rno:58952"/>
<dbReference type="UCSC" id="RGD:628610">
    <property type="organism name" value="rat"/>
</dbReference>
<dbReference type="AGR" id="RGD:628610"/>
<dbReference type="CTD" id="10404"/>
<dbReference type="RGD" id="628610">
    <property type="gene designation" value="Cpq"/>
</dbReference>
<dbReference type="eggNOG" id="KOG2195">
    <property type="taxonomic scope" value="Eukaryota"/>
</dbReference>
<dbReference type="GeneTree" id="ENSGT00390000018110"/>
<dbReference type="HOGENOM" id="CLU_033697_1_1_1"/>
<dbReference type="InParanoid" id="Q6IRK9"/>
<dbReference type="OMA" id="IVFYNRP"/>
<dbReference type="OrthoDB" id="10013407at2759"/>
<dbReference type="PhylomeDB" id="Q6IRK9"/>
<dbReference type="TreeFam" id="TF323248"/>
<dbReference type="PRO" id="PR:Q6IRK9"/>
<dbReference type="Proteomes" id="UP000002494">
    <property type="component" value="Chromosome 7"/>
</dbReference>
<dbReference type="Bgee" id="ENSRNOG00000005931">
    <property type="expression patterns" value="Expressed in liver and 19 other cell types or tissues"/>
</dbReference>
<dbReference type="GO" id="GO:0005737">
    <property type="term" value="C:cytoplasm"/>
    <property type="evidence" value="ECO:0000250"/>
    <property type="project" value="UniProtKB"/>
</dbReference>
<dbReference type="GO" id="GO:0005783">
    <property type="term" value="C:endoplasmic reticulum"/>
    <property type="evidence" value="ECO:0000314"/>
    <property type="project" value="UniProtKB"/>
</dbReference>
<dbReference type="GO" id="GO:0005615">
    <property type="term" value="C:extracellular space"/>
    <property type="evidence" value="ECO:0000314"/>
    <property type="project" value="UniProtKB"/>
</dbReference>
<dbReference type="GO" id="GO:0005794">
    <property type="term" value="C:Golgi apparatus"/>
    <property type="evidence" value="ECO:0000314"/>
    <property type="project" value="UniProtKB"/>
</dbReference>
<dbReference type="GO" id="GO:0005764">
    <property type="term" value="C:lysosome"/>
    <property type="evidence" value="ECO:0000314"/>
    <property type="project" value="UniProtKB"/>
</dbReference>
<dbReference type="GO" id="GO:0004180">
    <property type="term" value="F:carboxypeptidase activity"/>
    <property type="evidence" value="ECO:0007669"/>
    <property type="project" value="UniProtKB-KW"/>
</dbReference>
<dbReference type="GO" id="GO:0046872">
    <property type="term" value="F:metal ion binding"/>
    <property type="evidence" value="ECO:0007669"/>
    <property type="project" value="UniProtKB-KW"/>
</dbReference>
<dbReference type="GO" id="GO:0070573">
    <property type="term" value="F:metallodipeptidase activity"/>
    <property type="evidence" value="ECO:0000250"/>
    <property type="project" value="UniProtKB"/>
</dbReference>
<dbReference type="GO" id="GO:0042803">
    <property type="term" value="F:protein homodimerization activity"/>
    <property type="evidence" value="ECO:0000250"/>
    <property type="project" value="UniProtKB"/>
</dbReference>
<dbReference type="GO" id="GO:0043171">
    <property type="term" value="P:peptide catabolic process"/>
    <property type="evidence" value="ECO:0000250"/>
    <property type="project" value="UniProtKB"/>
</dbReference>
<dbReference type="GO" id="GO:0006508">
    <property type="term" value="P:proteolysis"/>
    <property type="evidence" value="ECO:0000314"/>
    <property type="project" value="UniProtKB"/>
</dbReference>
<dbReference type="GO" id="GO:0006590">
    <property type="term" value="P:thyroid hormone generation"/>
    <property type="evidence" value="ECO:0000314"/>
    <property type="project" value="UniProtKB"/>
</dbReference>
<dbReference type="GO" id="GO:0042246">
    <property type="term" value="P:tissue regeneration"/>
    <property type="evidence" value="ECO:0000270"/>
    <property type="project" value="RGD"/>
</dbReference>
<dbReference type="CDD" id="cd03883">
    <property type="entry name" value="M28_Pgcp_like"/>
    <property type="match status" value="1"/>
</dbReference>
<dbReference type="FunFam" id="3.40.630.10:FF:000036">
    <property type="entry name" value="Carboxypeptidase Q"/>
    <property type="match status" value="1"/>
</dbReference>
<dbReference type="FunFam" id="3.40.630.10:FF:000112">
    <property type="entry name" value="Carboxypeptidase Q"/>
    <property type="match status" value="1"/>
</dbReference>
<dbReference type="FunFam" id="3.50.30.30:FF:000009">
    <property type="entry name" value="Carboxypeptidase Q"/>
    <property type="match status" value="1"/>
</dbReference>
<dbReference type="Gene3D" id="3.50.30.30">
    <property type="match status" value="1"/>
</dbReference>
<dbReference type="Gene3D" id="3.40.630.10">
    <property type="entry name" value="Zn peptidases"/>
    <property type="match status" value="1"/>
</dbReference>
<dbReference type="InterPro" id="IPR039866">
    <property type="entry name" value="CPQ"/>
</dbReference>
<dbReference type="InterPro" id="IPR007484">
    <property type="entry name" value="Peptidase_M28"/>
</dbReference>
<dbReference type="PANTHER" id="PTHR12053:SF3">
    <property type="entry name" value="CARBOXYPEPTIDASE Q"/>
    <property type="match status" value="1"/>
</dbReference>
<dbReference type="PANTHER" id="PTHR12053">
    <property type="entry name" value="PROTEASE FAMILY M28 PLASMA GLUTAMATE CARBOXYPEPTIDASE-RELATED"/>
    <property type="match status" value="1"/>
</dbReference>
<dbReference type="Pfam" id="PF04389">
    <property type="entry name" value="Peptidase_M28"/>
    <property type="match status" value="1"/>
</dbReference>
<dbReference type="SUPFAM" id="SSF53187">
    <property type="entry name" value="Zn-dependent exopeptidases"/>
    <property type="match status" value="1"/>
</dbReference>